<accession>Q8VC10</accession>
<dbReference type="EC" id="1.14.13.-" evidence="1"/>
<dbReference type="EMBL" id="AC166781">
    <property type="status" value="NOT_ANNOTATED_CDS"/>
    <property type="molecule type" value="Genomic_DNA"/>
</dbReference>
<dbReference type="EMBL" id="CH466525">
    <property type="protein sequence ID" value="EDL11597.1"/>
    <property type="molecule type" value="Genomic_DNA"/>
</dbReference>
<dbReference type="EMBL" id="BC022135">
    <property type="protein sequence ID" value="AAH22135.1"/>
    <property type="molecule type" value="mRNA"/>
</dbReference>
<dbReference type="EMBL" id="BC132440">
    <property type="protein sequence ID" value="AAI32441.1"/>
    <property type="molecule type" value="mRNA"/>
</dbReference>
<dbReference type="EMBL" id="BC138192">
    <property type="protein sequence ID" value="AAI38193.1"/>
    <property type="molecule type" value="mRNA"/>
</dbReference>
<dbReference type="CCDS" id="CCDS22704.1"/>
<dbReference type="RefSeq" id="NP_082226.1">
    <property type="nucleotide sequence ID" value="NM_027950.2"/>
</dbReference>
<dbReference type="RefSeq" id="XP_006531440.1">
    <property type="nucleotide sequence ID" value="XM_006531377.4"/>
</dbReference>
<dbReference type="RefSeq" id="XP_006531444.1">
    <property type="nucleotide sequence ID" value="XM_006531381.5"/>
</dbReference>
<dbReference type="FunCoup" id="Q8VC10">
    <property type="interactions" value="21"/>
</dbReference>
<dbReference type="STRING" id="10090.ENSMUSP00000114467"/>
<dbReference type="iPTMnet" id="Q8VC10"/>
<dbReference type="PhosphoSitePlus" id="Q8VC10"/>
<dbReference type="PaxDb" id="10090-ENSMUSP00000114467"/>
<dbReference type="ProteomicsDB" id="330372"/>
<dbReference type="Antibodypedia" id="16990">
    <property type="antibodies" value="143 antibodies from 25 providers"/>
</dbReference>
<dbReference type="DNASU" id="71839"/>
<dbReference type="Ensembl" id="ENSMUST00000152420.8">
    <property type="protein sequence ID" value="ENSMUSP00000114467.2"/>
    <property type="gene ID" value="ENSMUSG00000074063.11"/>
</dbReference>
<dbReference type="GeneID" id="71839"/>
<dbReference type="KEGG" id="mmu:71839"/>
<dbReference type="UCSC" id="uc009npp.1">
    <property type="organism name" value="mouse"/>
</dbReference>
<dbReference type="AGR" id="MGI:1919089"/>
<dbReference type="CTD" id="29948"/>
<dbReference type="MGI" id="MGI:1919089">
    <property type="gene designation" value="Osgin1"/>
</dbReference>
<dbReference type="VEuPathDB" id="HostDB:ENSMUSG00000074063"/>
<dbReference type="eggNOG" id="ENOG502QRUQ">
    <property type="taxonomic scope" value="Eukaryota"/>
</dbReference>
<dbReference type="GeneTree" id="ENSGT00390000006658"/>
<dbReference type="HOGENOM" id="CLU_019308_2_0_1"/>
<dbReference type="InParanoid" id="Q8VC10"/>
<dbReference type="OMA" id="ASWDIQT"/>
<dbReference type="OrthoDB" id="412005at2759"/>
<dbReference type="PhylomeDB" id="Q8VC10"/>
<dbReference type="TreeFam" id="TF313502"/>
<dbReference type="BioGRID-ORCS" id="71839">
    <property type="hits" value="5 hits in 77 CRISPR screens"/>
</dbReference>
<dbReference type="PRO" id="PR:Q8VC10"/>
<dbReference type="Proteomes" id="UP000000589">
    <property type="component" value="Chromosome 8"/>
</dbReference>
<dbReference type="RNAct" id="Q8VC10">
    <property type="molecule type" value="protein"/>
</dbReference>
<dbReference type="Bgee" id="ENSMUSG00000074063">
    <property type="expression patterns" value="Expressed in granulocyte and 146 other cell types or tissues"/>
</dbReference>
<dbReference type="ExpressionAtlas" id="Q8VC10">
    <property type="expression patterns" value="baseline and differential"/>
</dbReference>
<dbReference type="GO" id="GO:0008083">
    <property type="term" value="F:growth factor activity"/>
    <property type="evidence" value="ECO:0007669"/>
    <property type="project" value="Ensembl"/>
</dbReference>
<dbReference type="GO" id="GO:0030154">
    <property type="term" value="P:cell differentiation"/>
    <property type="evidence" value="ECO:0007669"/>
    <property type="project" value="UniProtKB-KW"/>
</dbReference>
<dbReference type="GO" id="GO:0030308">
    <property type="term" value="P:negative regulation of cell growth"/>
    <property type="evidence" value="ECO:0007669"/>
    <property type="project" value="Ensembl"/>
</dbReference>
<dbReference type="FunFam" id="3.50.50.60:FF:000152">
    <property type="entry name" value="Oxidative stress-induced growth inhibitor 1"/>
    <property type="match status" value="1"/>
</dbReference>
<dbReference type="Gene3D" id="3.50.50.60">
    <property type="entry name" value="FAD/NAD(P)-binding domain"/>
    <property type="match status" value="1"/>
</dbReference>
<dbReference type="InterPro" id="IPR036188">
    <property type="entry name" value="FAD/NAD-bd_sf"/>
</dbReference>
<dbReference type="InterPro" id="IPR029731">
    <property type="entry name" value="OKL38_fam"/>
</dbReference>
<dbReference type="PANTHER" id="PTHR15192:SF15">
    <property type="entry name" value="OXIDATIVE STRESS-INDUCED GROWTH INHIBITOR 1"/>
    <property type="match status" value="1"/>
</dbReference>
<dbReference type="PANTHER" id="PTHR15192">
    <property type="entry name" value="PROTEIN CBG05349"/>
    <property type="match status" value="1"/>
</dbReference>
<dbReference type="Pfam" id="PF13738">
    <property type="entry name" value="Pyr_redox_3"/>
    <property type="match status" value="1"/>
</dbReference>
<dbReference type="SUPFAM" id="SSF51905">
    <property type="entry name" value="FAD/NAD(P)-binding domain"/>
    <property type="match status" value="1"/>
</dbReference>
<reference key="1">
    <citation type="journal article" date="2009" name="PLoS Biol.">
        <title>Lineage-specific biology revealed by a finished genome assembly of the mouse.</title>
        <authorList>
            <person name="Church D.M."/>
            <person name="Goodstadt L."/>
            <person name="Hillier L.W."/>
            <person name="Zody M.C."/>
            <person name="Goldstein S."/>
            <person name="She X."/>
            <person name="Bult C.J."/>
            <person name="Agarwala R."/>
            <person name="Cherry J.L."/>
            <person name="DiCuccio M."/>
            <person name="Hlavina W."/>
            <person name="Kapustin Y."/>
            <person name="Meric P."/>
            <person name="Maglott D."/>
            <person name="Birtle Z."/>
            <person name="Marques A.C."/>
            <person name="Graves T."/>
            <person name="Zhou S."/>
            <person name="Teague B."/>
            <person name="Potamousis K."/>
            <person name="Churas C."/>
            <person name="Place M."/>
            <person name="Herschleb J."/>
            <person name="Runnheim R."/>
            <person name="Forrest D."/>
            <person name="Amos-Landgraf J."/>
            <person name="Schwartz D.C."/>
            <person name="Cheng Z."/>
            <person name="Lindblad-Toh K."/>
            <person name="Eichler E.E."/>
            <person name="Ponting C.P."/>
        </authorList>
    </citation>
    <scope>NUCLEOTIDE SEQUENCE [LARGE SCALE GENOMIC DNA]</scope>
    <source>
        <strain>C57BL/6J</strain>
    </source>
</reference>
<reference key="2">
    <citation type="submission" date="2005-07" db="EMBL/GenBank/DDBJ databases">
        <authorList>
            <person name="Mural R.J."/>
            <person name="Adams M.D."/>
            <person name="Myers E.W."/>
            <person name="Smith H.O."/>
            <person name="Venter J.C."/>
        </authorList>
    </citation>
    <scope>NUCLEOTIDE SEQUENCE [LARGE SCALE GENOMIC DNA]</scope>
</reference>
<reference key="3">
    <citation type="journal article" date="2004" name="Genome Res.">
        <title>The status, quality, and expansion of the NIH full-length cDNA project: the Mammalian Gene Collection (MGC).</title>
        <authorList>
            <consortium name="The MGC Project Team"/>
        </authorList>
    </citation>
    <scope>NUCLEOTIDE SEQUENCE [LARGE SCALE MRNA]</scope>
</reference>
<keyword id="KW-0221">Differentiation</keyword>
<keyword id="KW-0274">FAD</keyword>
<keyword id="KW-0285">Flavoprotein</keyword>
<keyword id="KW-0341">Growth regulation</keyword>
<keyword id="KW-0503">Monooxygenase</keyword>
<keyword id="KW-0521">NADP</keyword>
<keyword id="KW-0560">Oxidoreductase</keyword>
<keyword id="KW-0597">Phosphoprotein</keyword>
<keyword id="KW-1185">Reference proteome</keyword>
<feature type="chain" id="PRO_0000447508" description="Oxidative stress-induced growth inhibitor 1">
    <location>
        <begin position="1"/>
        <end position="478"/>
    </location>
</feature>
<feature type="modified residue" description="Phosphoserine" evidence="1">
    <location>
        <position position="12"/>
    </location>
</feature>
<comment type="function">
    <text evidence="1">Monooxygenase catalytic activity (By similarity). Involved in regulation of cytokinesis; promotes RHOA activity, probably acting locally at the midbody in late cytokinesis (By similarity). Monooxygenase activity is involved in stabilizing transient structures between daughter cells, termed intercellular bridges, before abscission (By similarity). Regulates differentiation and proliferation through the regulation of cell death (By similarity).</text>
</comment>
<comment type="cofactor">
    <cofactor evidence="1">
        <name>NADPH</name>
        <dbReference type="ChEBI" id="CHEBI:57783"/>
    </cofactor>
    <text evidence="1">No monooxygenase catalytic activity in the absence of NADPH.</text>
</comment>
<comment type="subcellular location">
    <subcellularLocation>
        <location evidence="1">Midbody</location>
    </subcellularLocation>
    <text evidence="1">Localizes to the midbody in late cytokinesis.</text>
</comment>
<comment type="similarity">
    <text evidence="2">Belongs to the OKL38 family.</text>
</comment>
<sequence length="478" mass="52170">MTSWRHDSLGASSSEPLPVVIIGNGPSGICLSYLLSGHIPYVKPGAVHPHPLLQRKLAEAPGVSILDQDLEYLSEGLEGRSQSPVALLFDALLRPDTDFGGSIDSVLSWKRQKDRAVPHLVLGRNLPGGAWHSIEGSMVTLSQGQWMSLPDLQVKDWMRKKCRGLRNSRATAGDIAHYYRDYVIKKGLSHNFVSGAVVTAVEWAKSEHGSPEVQASSPLFQVNGYLTTKDHGHQPFSLRARNVVLATGTFDSPAMLGIPGETLPFVHHDLSALEAALRAGTVNPTSDPVLIVGAGLSAADAVLFARHYNIQVIHAFRRSVHDPGLVFNQLPKMLYPEYHKVQQMMRDQSILSPSPYEGYRSLPEHQPLLFKEDHQAVFQDPQGGQQLFGVSMVLVLIGSHPDLSYLPRAGADLVIDPDQPLSPKRNPIDVDPFTHESTHQEGLYALGPLAGDNFVRFVQGGALAAASSLLKKETRKPP</sequence>
<organism>
    <name type="scientific">Mus musculus</name>
    <name type="common">Mouse</name>
    <dbReference type="NCBI Taxonomy" id="10090"/>
    <lineage>
        <taxon>Eukaryota</taxon>
        <taxon>Metazoa</taxon>
        <taxon>Chordata</taxon>
        <taxon>Craniata</taxon>
        <taxon>Vertebrata</taxon>
        <taxon>Euteleostomi</taxon>
        <taxon>Mammalia</taxon>
        <taxon>Eutheria</taxon>
        <taxon>Euarchontoglires</taxon>
        <taxon>Glires</taxon>
        <taxon>Rodentia</taxon>
        <taxon>Myomorpha</taxon>
        <taxon>Muroidea</taxon>
        <taxon>Muridae</taxon>
        <taxon>Murinae</taxon>
        <taxon>Mus</taxon>
        <taxon>Mus</taxon>
    </lineage>
</organism>
<name>OSGI1_MOUSE</name>
<gene>
    <name evidence="3" type="primary">Osgin1</name>
</gene>
<proteinExistence type="evidence at transcript level"/>
<protein>
    <recommendedName>
        <fullName evidence="2">Oxidative stress-induced growth inhibitor 1</fullName>
        <ecNumber evidence="1">1.14.13.-</ecNumber>
    </recommendedName>
</protein>
<evidence type="ECO:0000250" key="1">
    <source>
        <dbReference type="UniProtKB" id="Q9UJX0"/>
    </source>
</evidence>
<evidence type="ECO:0000305" key="2"/>
<evidence type="ECO:0000312" key="3">
    <source>
        <dbReference type="MGI" id="MGI:1919089"/>
    </source>
</evidence>